<sequence length="61" mass="7225">MAEVRVGENESLDSALRRFRRQCSKAGVLSELRKREHYESPSVKRKKKAEAARKRKYKYGR</sequence>
<protein>
    <recommendedName>
        <fullName evidence="2">Small ribosomal subunit protein bS21</fullName>
    </recommendedName>
    <alternativeName>
        <fullName>30S ribosomal protein S21</fullName>
    </alternativeName>
</protein>
<feature type="chain" id="PRO_0000178395" description="Small ribosomal subunit protein bS21">
    <location>
        <begin position="1"/>
        <end position="61"/>
    </location>
</feature>
<feature type="region of interest" description="Disordered" evidence="1">
    <location>
        <begin position="36"/>
        <end position="61"/>
    </location>
</feature>
<feature type="compositionally biased region" description="Basic residues" evidence="1">
    <location>
        <begin position="43"/>
        <end position="61"/>
    </location>
</feature>
<keyword id="KW-1185">Reference proteome</keyword>
<keyword id="KW-0687">Ribonucleoprotein</keyword>
<keyword id="KW-0689">Ribosomal protein</keyword>
<gene>
    <name type="primary">rpsU</name>
    <name type="ordered locus">TTE0964</name>
</gene>
<accession>Q8RB59</accession>
<organism>
    <name type="scientific">Caldanaerobacter subterraneus subsp. tengcongensis (strain DSM 15242 / JCM 11007 / NBRC 100824 / MB4)</name>
    <name type="common">Thermoanaerobacter tengcongensis</name>
    <dbReference type="NCBI Taxonomy" id="273068"/>
    <lineage>
        <taxon>Bacteria</taxon>
        <taxon>Bacillati</taxon>
        <taxon>Bacillota</taxon>
        <taxon>Clostridia</taxon>
        <taxon>Thermoanaerobacterales</taxon>
        <taxon>Thermoanaerobacteraceae</taxon>
        <taxon>Caldanaerobacter</taxon>
    </lineage>
</organism>
<proteinExistence type="inferred from homology"/>
<name>RS21_CALS4</name>
<comment type="similarity">
    <text evidence="2">Belongs to the bacterial ribosomal protein bS21 family.</text>
</comment>
<comment type="sequence caution" evidence="2">
    <conflict type="erroneous initiation">
        <sequence resource="EMBL-CDS" id="AAM24220"/>
    </conflict>
</comment>
<evidence type="ECO:0000256" key="1">
    <source>
        <dbReference type="SAM" id="MobiDB-lite"/>
    </source>
</evidence>
<evidence type="ECO:0000305" key="2"/>
<dbReference type="EMBL" id="AE008691">
    <property type="protein sequence ID" value="AAM24220.1"/>
    <property type="status" value="ALT_INIT"/>
    <property type="molecule type" value="Genomic_DNA"/>
</dbReference>
<dbReference type="RefSeq" id="WP_011025339.1">
    <property type="nucleotide sequence ID" value="NZ_JANUCV010000001.1"/>
</dbReference>
<dbReference type="SMR" id="Q8RB59"/>
<dbReference type="STRING" id="273068.TTE0964"/>
<dbReference type="KEGG" id="tte:TTE0964"/>
<dbReference type="eggNOG" id="COG0828">
    <property type="taxonomic scope" value="Bacteria"/>
</dbReference>
<dbReference type="HOGENOM" id="CLU_159258_3_0_9"/>
<dbReference type="OrthoDB" id="9799244at2"/>
<dbReference type="Proteomes" id="UP000000555">
    <property type="component" value="Chromosome"/>
</dbReference>
<dbReference type="GO" id="GO:1990904">
    <property type="term" value="C:ribonucleoprotein complex"/>
    <property type="evidence" value="ECO:0007669"/>
    <property type="project" value="UniProtKB-KW"/>
</dbReference>
<dbReference type="GO" id="GO:0005840">
    <property type="term" value="C:ribosome"/>
    <property type="evidence" value="ECO:0007669"/>
    <property type="project" value="UniProtKB-KW"/>
</dbReference>
<dbReference type="GO" id="GO:0003735">
    <property type="term" value="F:structural constituent of ribosome"/>
    <property type="evidence" value="ECO:0007669"/>
    <property type="project" value="InterPro"/>
</dbReference>
<dbReference type="GO" id="GO:0006412">
    <property type="term" value="P:translation"/>
    <property type="evidence" value="ECO:0007669"/>
    <property type="project" value="UniProtKB-UniRule"/>
</dbReference>
<dbReference type="Gene3D" id="1.20.5.1150">
    <property type="entry name" value="Ribosomal protein S8"/>
    <property type="match status" value="1"/>
</dbReference>
<dbReference type="HAMAP" id="MF_00358">
    <property type="entry name" value="Ribosomal_bS21"/>
    <property type="match status" value="1"/>
</dbReference>
<dbReference type="InterPro" id="IPR001911">
    <property type="entry name" value="Ribosomal_bS21"/>
</dbReference>
<dbReference type="InterPro" id="IPR038380">
    <property type="entry name" value="Ribosomal_bS21_sf"/>
</dbReference>
<dbReference type="NCBIfam" id="TIGR00030">
    <property type="entry name" value="S21p"/>
    <property type="match status" value="1"/>
</dbReference>
<dbReference type="PANTHER" id="PTHR21109">
    <property type="entry name" value="MITOCHONDRIAL 28S RIBOSOMAL PROTEIN S21"/>
    <property type="match status" value="1"/>
</dbReference>
<dbReference type="PANTHER" id="PTHR21109:SF22">
    <property type="entry name" value="SMALL RIBOSOMAL SUBUNIT PROTEIN BS21"/>
    <property type="match status" value="1"/>
</dbReference>
<dbReference type="Pfam" id="PF01165">
    <property type="entry name" value="Ribosomal_S21"/>
    <property type="match status" value="1"/>
</dbReference>
<dbReference type="PRINTS" id="PR00976">
    <property type="entry name" value="RIBOSOMALS21"/>
</dbReference>
<reference key="1">
    <citation type="journal article" date="2002" name="Genome Res.">
        <title>A complete sequence of the T. tengcongensis genome.</title>
        <authorList>
            <person name="Bao Q."/>
            <person name="Tian Y."/>
            <person name="Li W."/>
            <person name="Xu Z."/>
            <person name="Xuan Z."/>
            <person name="Hu S."/>
            <person name="Dong W."/>
            <person name="Yang J."/>
            <person name="Chen Y."/>
            <person name="Xue Y."/>
            <person name="Xu Y."/>
            <person name="Lai X."/>
            <person name="Huang L."/>
            <person name="Dong X."/>
            <person name="Ma Y."/>
            <person name="Ling L."/>
            <person name="Tan H."/>
            <person name="Chen R."/>
            <person name="Wang J."/>
            <person name="Yu J."/>
            <person name="Yang H."/>
        </authorList>
    </citation>
    <scope>NUCLEOTIDE SEQUENCE [LARGE SCALE GENOMIC DNA]</scope>
    <source>
        <strain>DSM 15242 / JCM 11007 / NBRC 100824 / MB4</strain>
    </source>
</reference>